<evidence type="ECO:0000255" key="1">
    <source>
        <dbReference type="HAMAP-Rule" id="MF_00372"/>
    </source>
</evidence>
<proteinExistence type="inferred from homology"/>
<name>HUTI_BURMA</name>
<comment type="function">
    <text evidence="1">Catalyzes the hydrolytic cleavage of the carbon-nitrogen bond in imidazolone-5-propanoate to yield N-formimidoyl-L-glutamate. It is the third step in the universal histidine degradation pathway.</text>
</comment>
<comment type="catalytic activity">
    <reaction evidence="1">
        <text>4-imidazolone-5-propanoate + H2O = N-formimidoyl-L-glutamate</text>
        <dbReference type="Rhea" id="RHEA:23660"/>
        <dbReference type="ChEBI" id="CHEBI:15377"/>
        <dbReference type="ChEBI" id="CHEBI:58928"/>
        <dbReference type="ChEBI" id="CHEBI:77893"/>
        <dbReference type="EC" id="3.5.2.7"/>
    </reaction>
</comment>
<comment type="cofactor">
    <cofactor evidence="1">
        <name>Zn(2+)</name>
        <dbReference type="ChEBI" id="CHEBI:29105"/>
    </cofactor>
    <cofactor evidence="1">
        <name>Fe(3+)</name>
        <dbReference type="ChEBI" id="CHEBI:29034"/>
    </cofactor>
    <text evidence="1">Binds 1 zinc or iron ion per subunit.</text>
</comment>
<comment type="pathway">
    <text evidence="1">Amino-acid degradation; L-histidine degradation into L-glutamate; N-formimidoyl-L-glutamate from L-histidine: step 3/3.</text>
</comment>
<comment type="subcellular location">
    <subcellularLocation>
        <location evidence="1">Cytoplasm</location>
    </subcellularLocation>
</comment>
<comment type="similarity">
    <text evidence="1">Belongs to the metallo-dependent hydrolases superfamily. HutI family.</text>
</comment>
<protein>
    <recommendedName>
        <fullName evidence="1">Imidazolonepropionase</fullName>
        <ecNumber evidence="1">3.5.2.7</ecNumber>
    </recommendedName>
    <alternativeName>
        <fullName evidence="1">Imidazolone-5-propionate hydrolase</fullName>
    </alternativeName>
</protein>
<feature type="chain" id="PRO_0000306449" description="Imidazolonepropionase">
    <location>
        <begin position="1"/>
        <end position="407"/>
    </location>
</feature>
<feature type="binding site" evidence="1">
    <location>
        <position position="68"/>
    </location>
    <ligand>
        <name>Fe(3+)</name>
        <dbReference type="ChEBI" id="CHEBI:29034"/>
    </ligand>
</feature>
<feature type="binding site" evidence="1">
    <location>
        <position position="68"/>
    </location>
    <ligand>
        <name>Zn(2+)</name>
        <dbReference type="ChEBI" id="CHEBI:29105"/>
    </ligand>
</feature>
<feature type="binding site" evidence="1">
    <location>
        <position position="70"/>
    </location>
    <ligand>
        <name>Fe(3+)</name>
        <dbReference type="ChEBI" id="CHEBI:29034"/>
    </ligand>
</feature>
<feature type="binding site" evidence="1">
    <location>
        <position position="70"/>
    </location>
    <ligand>
        <name>Zn(2+)</name>
        <dbReference type="ChEBI" id="CHEBI:29105"/>
    </ligand>
</feature>
<feature type="binding site" evidence="1">
    <location>
        <position position="77"/>
    </location>
    <ligand>
        <name>4-imidazolone-5-propanoate</name>
        <dbReference type="ChEBI" id="CHEBI:77893"/>
    </ligand>
</feature>
<feature type="binding site" evidence="1">
    <location>
        <position position="140"/>
    </location>
    <ligand>
        <name>4-imidazolone-5-propanoate</name>
        <dbReference type="ChEBI" id="CHEBI:77893"/>
    </ligand>
</feature>
<feature type="binding site" evidence="1">
    <location>
        <position position="140"/>
    </location>
    <ligand>
        <name>N-formimidoyl-L-glutamate</name>
        <dbReference type="ChEBI" id="CHEBI:58928"/>
    </ligand>
</feature>
<feature type="binding site" evidence="1">
    <location>
        <position position="173"/>
    </location>
    <ligand>
        <name>4-imidazolone-5-propanoate</name>
        <dbReference type="ChEBI" id="CHEBI:77893"/>
    </ligand>
</feature>
<feature type="binding site" evidence="1">
    <location>
        <position position="238"/>
    </location>
    <ligand>
        <name>Fe(3+)</name>
        <dbReference type="ChEBI" id="CHEBI:29034"/>
    </ligand>
</feature>
<feature type="binding site" evidence="1">
    <location>
        <position position="238"/>
    </location>
    <ligand>
        <name>Zn(2+)</name>
        <dbReference type="ChEBI" id="CHEBI:29105"/>
    </ligand>
</feature>
<feature type="binding site" evidence="1">
    <location>
        <position position="241"/>
    </location>
    <ligand>
        <name>4-imidazolone-5-propanoate</name>
        <dbReference type="ChEBI" id="CHEBI:77893"/>
    </ligand>
</feature>
<feature type="binding site" evidence="1">
    <location>
        <position position="313"/>
    </location>
    <ligand>
        <name>Fe(3+)</name>
        <dbReference type="ChEBI" id="CHEBI:29034"/>
    </ligand>
</feature>
<feature type="binding site" evidence="1">
    <location>
        <position position="313"/>
    </location>
    <ligand>
        <name>Zn(2+)</name>
        <dbReference type="ChEBI" id="CHEBI:29105"/>
    </ligand>
</feature>
<feature type="binding site" evidence="1">
    <location>
        <position position="315"/>
    </location>
    <ligand>
        <name>N-formimidoyl-L-glutamate</name>
        <dbReference type="ChEBI" id="CHEBI:58928"/>
    </ligand>
</feature>
<feature type="binding site" evidence="1">
    <location>
        <position position="317"/>
    </location>
    <ligand>
        <name>N-formimidoyl-L-glutamate</name>
        <dbReference type="ChEBI" id="CHEBI:58928"/>
    </ligand>
</feature>
<feature type="binding site" evidence="1">
    <location>
        <position position="318"/>
    </location>
    <ligand>
        <name>4-imidazolone-5-propanoate</name>
        <dbReference type="ChEBI" id="CHEBI:77893"/>
    </ligand>
</feature>
<accession>Q62LJ2</accession>
<gene>
    <name evidence="1" type="primary">hutI</name>
    <name type="ordered locus">BMA0649</name>
</gene>
<sequence>MKSILWHNLKLCAHGDPNDTIADAAIAVNGDGTIAWTGRASDVPAGYVHWPREDLRGAWVTPGLVDCHTHLVYGGQRADEFAQRLAGASYEEIAQRGGGIVSTVRATRDASEAALFEQACARLRPLLAEGVTAIEIKSGYGLELASERRMLRVARQLGERFPVSVYTTFLGAHALPPEYAGRADEYIDEVCERMLPALADEGLVDAVDVFCERIGFTLAQSERVFEAAARRGLPVKMHAEQLSNGGGSALAARYRALSADHLEYLDAAGVAAMRASGTTAVLLPGAYYFIRETKLPPIDLLRRHGVPIALATDHNPGTSPLTSLLLTMNMGCTVFKLTVQEALLGVTRHAAAALGASDRHGSLAPGRQADFAVWSVSTLAELAYWFGRPLCERVVKGGVTVFTRDAR</sequence>
<reference key="1">
    <citation type="journal article" date="2004" name="Proc. Natl. Acad. Sci. U.S.A.">
        <title>Structural flexibility in the Burkholderia mallei genome.</title>
        <authorList>
            <person name="Nierman W.C."/>
            <person name="DeShazer D."/>
            <person name="Kim H.S."/>
            <person name="Tettelin H."/>
            <person name="Nelson K.E."/>
            <person name="Feldblyum T.V."/>
            <person name="Ulrich R.L."/>
            <person name="Ronning C.M."/>
            <person name="Brinkac L.M."/>
            <person name="Daugherty S.C."/>
            <person name="Davidsen T.D."/>
            <person name="DeBoy R.T."/>
            <person name="Dimitrov G."/>
            <person name="Dodson R.J."/>
            <person name="Durkin A.S."/>
            <person name="Gwinn M.L."/>
            <person name="Haft D.H."/>
            <person name="Khouri H.M."/>
            <person name="Kolonay J.F."/>
            <person name="Madupu R."/>
            <person name="Mohammoud Y."/>
            <person name="Nelson W.C."/>
            <person name="Radune D."/>
            <person name="Romero C.M."/>
            <person name="Sarria S."/>
            <person name="Selengut J."/>
            <person name="Shamblin C."/>
            <person name="Sullivan S.A."/>
            <person name="White O."/>
            <person name="Yu Y."/>
            <person name="Zafar N."/>
            <person name="Zhou L."/>
            <person name="Fraser C.M."/>
        </authorList>
    </citation>
    <scope>NUCLEOTIDE SEQUENCE [LARGE SCALE GENOMIC DNA]</scope>
    <source>
        <strain>ATCC 23344</strain>
    </source>
</reference>
<keyword id="KW-0963">Cytoplasm</keyword>
<keyword id="KW-0369">Histidine metabolism</keyword>
<keyword id="KW-0378">Hydrolase</keyword>
<keyword id="KW-0408">Iron</keyword>
<keyword id="KW-0479">Metal-binding</keyword>
<keyword id="KW-1185">Reference proteome</keyword>
<keyword id="KW-0862">Zinc</keyword>
<dbReference type="EC" id="3.5.2.7" evidence="1"/>
<dbReference type="EMBL" id="CP000010">
    <property type="protein sequence ID" value="AAU49661.1"/>
    <property type="molecule type" value="Genomic_DNA"/>
</dbReference>
<dbReference type="RefSeq" id="WP_004191108.1">
    <property type="nucleotide sequence ID" value="NC_006348.1"/>
</dbReference>
<dbReference type="RefSeq" id="YP_102427.1">
    <property type="nucleotide sequence ID" value="NC_006348.1"/>
</dbReference>
<dbReference type="SMR" id="Q62LJ2"/>
<dbReference type="GeneID" id="92978414"/>
<dbReference type="KEGG" id="bma:BMA0649"/>
<dbReference type="PATRIC" id="fig|243160.12.peg.670"/>
<dbReference type="eggNOG" id="COG1228">
    <property type="taxonomic scope" value="Bacteria"/>
</dbReference>
<dbReference type="HOGENOM" id="CLU_041647_0_0_4"/>
<dbReference type="UniPathway" id="UPA00379">
    <property type="reaction ID" value="UER00551"/>
</dbReference>
<dbReference type="Proteomes" id="UP000006693">
    <property type="component" value="Chromosome 1"/>
</dbReference>
<dbReference type="GO" id="GO:0005737">
    <property type="term" value="C:cytoplasm"/>
    <property type="evidence" value="ECO:0007669"/>
    <property type="project" value="UniProtKB-SubCell"/>
</dbReference>
<dbReference type="GO" id="GO:0050480">
    <property type="term" value="F:imidazolonepropionase activity"/>
    <property type="evidence" value="ECO:0007669"/>
    <property type="project" value="UniProtKB-UniRule"/>
</dbReference>
<dbReference type="GO" id="GO:0005506">
    <property type="term" value="F:iron ion binding"/>
    <property type="evidence" value="ECO:0007669"/>
    <property type="project" value="UniProtKB-UniRule"/>
</dbReference>
<dbReference type="GO" id="GO:0008270">
    <property type="term" value="F:zinc ion binding"/>
    <property type="evidence" value="ECO:0007669"/>
    <property type="project" value="UniProtKB-UniRule"/>
</dbReference>
<dbReference type="GO" id="GO:0019556">
    <property type="term" value="P:L-histidine catabolic process to glutamate and formamide"/>
    <property type="evidence" value="ECO:0007669"/>
    <property type="project" value="UniProtKB-UniPathway"/>
</dbReference>
<dbReference type="GO" id="GO:0019557">
    <property type="term" value="P:L-histidine catabolic process to glutamate and formate"/>
    <property type="evidence" value="ECO:0007669"/>
    <property type="project" value="UniProtKB-UniPathway"/>
</dbReference>
<dbReference type="CDD" id="cd01296">
    <property type="entry name" value="Imidazolone-5PH"/>
    <property type="match status" value="1"/>
</dbReference>
<dbReference type="FunFam" id="3.20.20.140:FF:000007">
    <property type="entry name" value="Imidazolonepropionase"/>
    <property type="match status" value="1"/>
</dbReference>
<dbReference type="Gene3D" id="3.20.20.140">
    <property type="entry name" value="Metal-dependent hydrolases"/>
    <property type="match status" value="1"/>
</dbReference>
<dbReference type="Gene3D" id="2.30.40.10">
    <property type="entry name" value="Urease, subunit C, domain 1"/>
    <property type="match status" value="1"/>
</dbReference>
<dbReference type="HAMAP" id="MF_00372">
    <property type="entry name" value="HutI"/>
    <property type="match status" value="1"/>
</dbReference>
<dbReference type="InterPro" id="IPR006680">
    <property type="entry name" value="Amidohydro-rel"/>
</dbReference>
<dbReference type="InterPro" id="IPR005920">
    <property type="entry name" value="HutI"/>
</dbReference>
<dbReference type="InterPro" id="IPR011059">
    <property type="entry name" value="Metal-dep_hydrolase_composite"/>
</dbReference>
<dbReference type="InterPro" id="IPR032466">
    <property type="entry name" value="Metal_Hydrolase"/>
</dbReference>
<dbReference type="NCBIfam" id="TIGR01224">
    <property type="entry name" value="hutI"/>
    <property type="match status" value="1"/>
</dbReference>
<dbReference type="PANTHER" id="PTHR42752">
    <property type="entry name" value="IMIDAZOLONEPROPIONASE"/>
    <property type="match status" value="1"/>
</dbReference>
<dbReference type="PANTHER" id="PTHR42752:SF1">
    <property type="entry name" value="IMIDAZOLONEPROPIONASE-RELATED"/>
    <property type="match status" value="1"/>
</dbReference>
<dbReference type="Pfam" id="PF01979">
    <property type="entry name" value="Amidohydro_1"/>
    <property type="match status" value="1"/>
</dbReference>
<dbReference type="SUPFAM" id="SSF51338">
    <property type="entry name" value="Composite domain of metallo-dependent hydrolases"/>
    <property type="match status" value="1"/>
</dbReference>
<dbReference type="SUPFAM" id="SSF51556">
    <property type="entry name" value="Metallo-dependent hydrolases"/>
    <property type="match status" value="1"/>
</dbReference>
<organism>
    <name type="scientific">Burkholderia mallei (strain ATCC 23344)</name>
    <dbReference type="NCBI Taxonomy" id="243160"/>
    <lineage>
        <taxon>Bacteria</taxon>
        <taxon>Pseudomonadati</taxon>
        <taxon>Pseudomonadota</taxon>
        <taxon>Betaproteobacteria</taxon>
        <taxon>Burkholderiales</taxon>
        <taxon>Burkholderiaceae</taxon>
        <taxon>Burkholderia</taxon>
        <taxon>pseudomallei group</taxon>
    </lineage>
</organism>